<dbReference type="EC" id="3.6.1.23" evidence="1"/>
<dbReference type="EMBL" id="CP001131">
    <property type="protein sequence ID" value="ACG72401.1"/>
    <property type="molecule type" value="Genomic_DNA"/>
</dbReference>
<dbReference type="RefSeq" id="WP_012525226.1">
    <property type="nucleotide sequence ID" value="NC_011145.1"/>
</dbReference>
<dbReference type="SMR" id="B4UHG6"/>
<dbReference type="KEGG" id="ank:AnaeK_1168"/>
<dbReference type="HOGENOM" id="CLU_068508_1_2_7"/>
<dbReference type="OrthoDB" id="9809956at2"/>
<dbReference type="UniPathway" id="UPA00610">
    <property type="reaction ID" value="UER00666"/>
</dbReference>
<dbReference type="Proteomes" id="UP000001871">
    <property type="component" value="Chromosome"/>
</dbReference>
<dbReference type="GO" id="GO:0004170">
    <property type="term" value="F:dUTP diphosphatase activity"/>
    <property type="evidence" value="ECO:0007669"/>
    <property type="project" value="UniProtKB-UniRule"/>
</dbReference>
<dbReference type="GO" id="GO:0000287">
    <property type="term" value="F:magnesium ion binding"/>
    <property type="evidence" value="ECO:0007669"/>
    <property type="project" value="UniProtKB-UniRule"/>
</dbReference>
<dbReference type="GO" id="GO:0006226">
    <property type="term" value="P:dUMP biosynthetic process"/>
    <property type="evidence" value="ECO:0007669"/>
    <property type="project" value="UniProtKB-UniRule"/>
</dbReference>
<dbReference type="GO" id="GO:0046081">
    <property type="term" value="P:dUTP catabolic process"/>
    <property type="evidence" value="ECO:0007669"/>
    <property type="project" value="InterPro"/>
</dbReference>
<dbReference type="CDD" id="cd07557">
    <property type="entry name" value="trimeric_dUTPase"/>
    <property type="match status" value="1"/>
</dbReference>
<dbReference type="Gene3D" id="2.70.40.10">
    <property type="match status" value="1"/>
</dbReference>
<dbReference type="HAMAP" id="MF_00116">
    <property type="entry name" value="dUTPase_bact"/>
    <property type="match status" value="1"/>
</dbReference>
<dbReference type="InterPro" id="IPR008181">
    <property type="entry name" value="dUTPase"/>
</dbReference>
<dbReference type="InterPro" id="IPR029054">
    <property type="entry name" value="dUTPase-like"/>
</dbReference>
<dbReference type="InterPro" id="IPR036157">
    <property type="entry name" value="dUTPase-like_sf"/>
</dbReference>
<dbReference type="InterPro" id="IPR033704">
    <property type="entry name" value="dUTPase_trimeric"/>
</dbReference>
<dbReference type="NCBIfam" id="TIGR00576">
    <property type="entry name" value="dut"/>
    <property type="match status" value="1"/>
</dbReference>
<dbReference type="NCBIfam" id="NF001862">
    <property type="entry name" value="PRK00601.1"/>
    <property type="match status" value="1"/>
</dbReference>
<dbReference type="PANTHER" id="PTHR11241">
    <property type="entry name" value="DEOXYURIDINE 5'-TRIPHOSPHATE NUCLEOTIDOHYDROLASE"/>
    <property type="match status" value="1"/>
</dbReference>
<dbReference type="PANTHER" id="PTHR11241:SF0">
    <property type="entry name" value="DEOXYURIDINE 5'-TRIPHOSPHATE NUCLEOTIDOHYDROLASE"/>
    <property type="match status" value="1"/>
</dbReference>
<dbReference type="Pfam" id="PF00692">
    <property type="entry name" value="dUTPase"/>
    <property type="match status" value="1"/>
</dbReference>
<dbReference type="SUPFAM" id="SSF51283">
    <property type="entry name" value="dUTPase-like"/>
    <property type="match status" value="1"/>
</dbReference>
<proteinExistence type="inferred from homology"/>
<organism>
    <name type="scientific">Anaeromyxobacter sp. (strain K)</name>
    <dbReference type="NCBI Taxonomy" id="447217"/>
    <lineage>
        <taxon>Bacteria</taxon>
        <taxon>Pseudomonadati</taxon>
        <taxon>Myxococcota</taxon>
        <taxon>Myxococcia</taxon>
        <taxon>Myxococcales</taxon>
        <taxon>Cystobacterineae</taxon>
        <taxon>Anaeromyxobacteraceae</taxon>
        <taxon>Anaeromyxobacter</taxon>
    </lineage>
</organism>
<reference key="1">
    <citation type="submission" date="2008-08" db="EMBL/GenBank/DDBJ databases">
        <title>Complete sequence of Anaeromyxobacter sp. K.</title>
        <authorList>
            <consortium name="US DOE Joint Genome Institute"/>
            <person name="Lucas S."/>
            <person name="Copeland A."/>
            <person name="Lapidus A."/>
            <person name="Glavina del Rio T."/>
            <person name="Dalin E."/>
            <person name="Tice H."/>
            <person name="Bruce D."/>
            <person name="Goodwin L."/>
            <person name="Pitluck S."/>
            <person name="Saunders E."/>
            <person name="Brettin T."/>
            <person name="Detter J.C."/>
            <person name="Han C."/>
            <person name="Larimer F."/>
            <person name="Land M."/>
            <person name="Hauser L."/>
            <person name="Kyrpides N."/>
            <person name="Ovchinnikiva G."/>
            <person name="Beliaev A."/>
        </authorList>
    </citation>
    <scope>NUCLEOTIDE SEQUENCE [LARGE SCALE GENOMIC DNA]</scope>
    <source>
        <strain>K</strain>
    </source>
</reference>
<protein>
    <recommendedName>
        <fullName evidence="1">Deoxyuridine 5'-triphosphate nucleotidohydrolase</fullName>
        <shortName evidence="1">dUTPase</shortName>
        <ecNumber evidence="1">3.6.1.23</ecNumber>
    </recommendedName>
    <alternativeName>
        <fullName evidence="1">dUTP pyrophosphatase</fullName>
    </alternativeName>
</protein>
<feature type="chain" id="PRO_1000094941" description="Deoxyuridine 5'-triphosphate nucleotidohydrolase">
    <location>
        <begin position="1"/>
        <end position="147"/>
    </location>
</feature>
<feature type="binding site" evidence="1">
    <location>
        <begin position="67"/>
        <end position="69"/>
    </location>
    <ligand>
        <name>substrate</name>
    </ligand>
</feature>
<feature type="binding site" evidence="1">
    <location>
        <position position="80"/>
    </location>
    <ligand>
        <name>substrate</name>
    </ligand>
</feature>
<feature type="binding site" evidence="1">
    <location>
        <begin position="84"/>
        <end position="86"/>
    </location>
    <ligand>
        <name>substrate</name>
    </ligand>
</feature>
<accession>B4UHG6</accession>
<gene>
    <name evidence="1" type="primary">dut</name>
    <name type="ordered locus">AnaeK_1168</name>
</gene>
<sequence>MPVTVRVRRVGHRGPPLDLPRYESAGAAGLDLRADEPFTLAPGERRVVPTGLALELPPGHEGQVRPRSGLAARHGVGMVNAPGTIDADYRGEVGVILVNHGQAPVAFARGDRIAQLVIAPVVRAELELVDALSDSDRGAGGFGSTGQ</sequence>
<evidence type="ECO:0000255" key="1">
    <source>
        <dbReference type="HAMAP-Rule" id="MF_00116"/>
    </source>
</evidence>
<comment type="function">
    <text evidence="1">This enzyme is involved in nucleotide metabolism: it produces dUMP, the immediate precursor of thymidine nucleotides and it decreases the intracellular concentration of dUTP so that uracil cannot be incorporated into DNA.</text>
</comment>
<comment type="catalytic activity">
    <reaction evidence="1">
        <text>dUTP + H2O = dUMP + diphosphate + H(+)</text>
        <dbReference type="Rhea" id="RHEA:10248"/>
        <dbReference type="ChEBI" id="CHEBI:15377"/>
        <dbReference type="ChEBI" id="CHEBI:15378"/>
        <dbReference type="ChEBI" id="CHEBI:33019"/>
        <dbReference type="ChEBI" id="CHEBI:61555"/>
        <dbReference type="ChEBI" id="CHEBI:246422"/>
        <dbReference type="EC" id="3.6.1.23"/>
    </reaction>
</comment>
<comment type="cofactor">
    <cofactor evidence="1">
        <name>Mg(2+)</name>
        <dbReference type="ChEBI" id="CHEBI:18420"/>
    </cofactor>
</comment>
<comment type="pathway">
    <text evidence="1">Pyrimidine metabolism; dUMP biosynthesis; dUMP from dCTP (dUTP route): step 2/2.</text>
</comment>
<comment type="similarity">
    <text evidence="1">Belongs to the dUTPase family.</text>
</comment>
<keyword id="KW-0378">Hydrolase</keyword>
<keyword id="KW-0460">Magnesium</keyword>
<keyword id="KW-0479">Metal-binding</keyword>
<keyword id="KW-0546">Nucleotide metabolism</keyword>
<name>DUT_ANASK</name>